<proteinExistence type="evidence at protein level"/>
<name>HV311_HUMAN</name>
<dbReference type="EMBL" id="AC247036">
    <property type="status" value="NOT_ANNOTATED_CDS"/>
    <property type="molecule type" value="Genomic_DNA"/>
</dbReference>
<dbReference type="PIR" id="A02045">
    <property type="entry name" value="A1HUTR"/>
</dbReference>
<dbReference type="SMR" id="P01762"/>
<dbReference type="FunCoup" id="P01762">
    <property type="interactions" value="411"/>
</dbReference>
<dbReference type="STRING" id="9606.ENSP00000474135"/>
<dbReference type="IMGT_GENE-DB" id="IGHV3-11"/>
<dbReference type="BioMuta" id="IGHV3-11"/>
<dbReference type="DMDM" id="123841"/>
<dbReference type="jPOST" id="P01762"/>
<dbReference type="MassIVE" id="P01762"/>
<dbReference type="PaxDb" id="9606-ENSP00000478725"/>
<dbReference type="PRIDE" id="P01762"/>
<dbReference type="Pumba" id="P01762"/>
<dbReference type="Ensembl" id="ENST00000390601.3">
    <property type="protein sequence ID" value="ENSP00000375010.2"/>
    <property type="gene ID" value="ENSG00000211941.3"/>
</dbReference>
<dbReference type="Ensembl" id="ENST00000634015.1">
    <property type="protein sequence ID" value="ENSP00000488236.1"/>
    <property type="gene ID" value="ENSG00000282322.1"/>
</dbReference>
<dbReference type="AGR" id="HGNC:5580"/>
<dbReference type="GeneCards" id="IGHV3-11"/>
<dbReference type="HGNC" id="HGNC:5580">
    <property type="gene designation" value="IGHV3-11"/>
</dbReference>
<dbReference type="HPA" id="ENSG00000211941">
    <property type="expression patterns" value="Tissue enhanced (intestine, lymphoid tissue, stomach)"/>
</dbReference>
<dbReference type="neXtProt" id="NX_P01762"/>
<dbReference type="OpenTargets" id="ENSG00000211941"/>
<dbReference type="VEuPathDB" id="HostDB:ENSG00000211941"/>
<dbReference type="eggNOG" id="ENOG502S5S3">
    <property type="taxonomic scope" value="Eukaryota"/>
</dbReference>
<dbReference type="GeneTree" id="ENSGT01050000244871"/>
<dbReference type="InParanoid" id="P01762"/>
<dbReference type="OMA" id="ISSYHMA"/>
<dbReference type="PAN-GO" id="P01762">
    <property type="GO annotations" value="11 GO annotations based on evolutionary models"/>
</dbReference>
<dbReference type="PhylomeDB" id="P01762"/>
<dbReference type="PathwayCommons" id="P01762"/>
<dbReference type="Reactome" id="R-HSA-166663">
    <property type="pathway name" value="Initial triggering of complement"/>
</dbReference>
<dbReference type="Reactome" id="R-HSA-173623">
    <property type="pathway name" value="Classical antibody-mediated complement activation"/>
</dbReference>
<dbReference type="Reactome" id="R-HSA-198933">
    <property type="pathway name" value="Immunoregulatory interactions between a Lymphoid and a non-Lymphoid cell"/>
</dbReference>
<dbReference type="Reactome" id="R-HSA-202733">
    <property type="pathway name" value="Cell surface interactions at the vascular wall"/>
</dbReference>
<dbReference type="Reactome" id="R-HSA-2029481">
    <property type="pathway name" value="FCGR activation"/>
</dbReference>
<dbReference type="Reactome" id="R-HSA-2029482">
    <property type="pathway name" value="Regulation of actin dynamics for phagocytic cup formation"/>
</dbReference>
<dbReference type="Reactome" id="R-HSA-2029485">
    <property type="pathway name" value="Role of phospholipids in phagocytosis"/>
</dbReference>
<dbReference type="Reactome" id="R-HSA-2168880">
    <property type="pathway name" value="Scavenging of heme from plasma"/>
</dbReference>
<dbReference type="Reactome" id="R-HSA-2454202">
    <property type="pathway name" value="Fc epsilon receptor (FCERI) signaling"/>
</dbReference>
<dbReference type="Reactome" id="R-HSA-2730905">
    <property type="pathway name" value="Role of LAT2/NTAL/LAB on calcium mobilization"/>
</dbReference>
<dbReference type="Reactome" id="R-HSA-2871796">
    <property type="pathway name" value="FCERI mediated MAPK activation"/>
</dbReference>
<dbReference type="Reactome" id="R-HSA-2871809">
    <property type="pathway name" value="FCERI mediated Ca+2 mobilization"/>
</dbReference>
<dbReference type="Reactome" id="R-HSA-2871837">
    <property type="pathway name" value="FCERI mediated NF-kB activation"/>
</dbReference>
<dbReference type="Reactome" id="R-HSA-5690714">
    <property type="pathway name" value="CD22 mediated BCR regulation"/>
</dbReference>
<dbReference type="Reactome" id="R-HSA-9664323">
    <property type="pathway name" value="FCGR3A-mediated IL10 synthesis"/>
</dbReference>
<dbReference type="Reactome" id="R-HSA-9664422">
    <property type="pathway name" value="FCGR3A-mediated phagocytosis"/>
</dbReference>
<dbReference type="Reactome" id="R-HSA-9679191">
    <property type="pathway name" value="Potential therapeutics for SARS"/>
</dbReference>
<dbReference type="Reactome" id="R-HSA-977606">
    <property type="pathway name" value="Regulation of Complement cascade"/>
</dbReference>
<dbReference type="Reactome" id="R-HSA-983695">
    <property type="pathway name" value="Antigen activates B Cell Receptor (BCR) leading to generation of second messengers"/>
</dbReference>
<dbReference type="ChiTaRS" id="IGHV3-11">
    <property type="organism name" value="human"/>
</dbReference>
<dbReference type="Pharos" id="P01762">
    <property type="development level" value="Tdark"/>
</dbReference>
<dbReference type="PRO" id="PR:P01762"/>
<dbReference type="Proteomes" id="UP000005640">
    <property type="component" value="Chromosome 14"/>
</dbReference>
<dbReference type="RNAct" id="P01762">
    <property type="molecule type" value="protein"/>
</dbReference>
<dbReference type="Bgee" id="ENSG00000211941">
    <property type="expression patterns" value="Expressed in duodenum and 89 other cell types or tissues"/>
</dbReference>
<dbReference type="GO" id="GO:0005576">
    <property type="term" value="C:extracellular region"/>
    <property type="evidence" value="ECO:0000304"/>
    <property type="project" value="Reactome"/>
</dbReference>
<dbReference type="GO" id="GO:0019814">
    <property type="term" value="C:immunoglobulin complex"/>
    <property type="evidence" value="ECO:0007669"/>
    <property type="project" value="UniProtKB-KW"/>
</dbReference>
<dbReference type="GO" id="GO:0005886">
    <property type="term" value="C:plasma membrane"/>
    <property type="evidence" value="ECO:0000304"/>
    <property type="project" value="Reactome"/>
</dbReference>
<dbReference type="GO" id="GO:0003823">
    <property type="term" value="F:antigen binding"/>
    <property type="evidence" value="ECO:0000318"/>
    <property type="project" value="GO_Central"/>
</dbReference>
<dbReference type="GO" id="GO:0006955">
    <property type="term" value="P:immune response"/>
    <property type="evidence" value="ECO:0000303"/>
    <property type="project" value="UniProtKB"/>
</dbReference>
<dbReference type="GO" id="GO:0016064">
    <property type="term" value="P:immunoglobulin mediated immune response"/>
    <property type="evidence" value="ECO:0000318"/>
    <property type="project" value="GO_Central"/>
</dbReference>
<dbReference type="CDD" id="cd04981">
    <property type="entry name" value="IgV_H"/>
    <property type="match status" value="1"/>
</dbReference>
<dbReference type="FunFam" id="2.60.40.10:FF:000942">
    <property type="entry name" value="Immunoglobulin heavy variable 3-23"/>
    <property type="match status" value="1"/>
</dbReference>
<dbReference type="Gene3D" id="2.60.40.10">
    <property type="entry name" value="Immunoglobulins"/>
    <property type="match status" value="1"/>
</dbReference>
<dbReference type="InterPro" id="IPR007110">
    <property type="entry name" value="Ig-like_dom"/>
</dbReference>
<dbReference type="InterPro" id="IPR036179">
    <property type="entry name" value="Ig-like_dom_sf"/>
</dbReference>
<dbReference type="InterPro" id="IPR013783">
    <property type="entry name" value="Ig-like_fold"/>
</dbReference>
<dbReference type="InterPro" id="IPR013106">
    <property type="entry name" value="Ig_V-set"/>
</dbReference>
<dbReference type="InterPro" id="IPR050199">
    <property type="entry name" value="IgHV"/>
</dbReference>
<dbReference type="PANTHER" id="PTHR23266">
    <property type="entry name" value="IMMUNOGLOBULIN HEAVY CHAIN"/>
    <property type="match status" value="1"/>
</dbReference>
<dbReference type="Pfam" id="PF07686">
    <property type="entry name" value="V-set"/>
    <property type="match status" value="1"/>
</dbReference>
<dbReference type="SMART" id="SM00406">
    <property type="entry name" value="IGv"/>
    <property type="match status" value="1"/>
</dbReference>
<dbReference type="SUPFAM" id="SSF48726">
    <property type="entry name" value="Immunoglobulin"/>
    <property type="match status" value="1"/>
</dbReference>
<dbReference type="PROSITE" id="PS50835">
    <property type="entry name" value="IG_LIKE"/>
    <property type="match status" value="1"/>
</dbReference>
<reference key="1">
    <citation type="journal article" date="2003" name="Nature">
        <title>The DNA sequence and analysis of human chromosome 14.</title>
        <authorList>
            <person name="Heilig R."/>
            <person name="Eckenberg R."/>
            <person name="Petit J.-L."/>
            <person name="Fonknechten N."/>
            <person name="Da Silva C."/>
            <person name="Cattolico L."/>
            <person name="Levy M."/>
            <person name="Barbe V."/>
            <person name="De Berardinis V."/>
            <person name="Ureta-Vidal A."/>
            <person name="Pelletier E."/>
            <person name="Vico V."/>
            <person name="Anthouard V."/>
            <person name="Rowen L."/>
            <person name="Madan A."/>
            <person name="Qin S."/>
            <person name="Sun H."/>
            <person name="Du H."/>
            <person name="Pepin K."/>
            <person name="Artiguenave F."/>
            <person name="Robert C."/>
            <person name="Cruaud C."/>
            <person name="Bruels T."/>
            <person name="Jaillon O."/>
            <person name="Friedlander L."/>
            <person name="Samson G."/>
            <person name="Brottier P."/>
            <person name="Cure S."/>
            <person name="Segurens B."/>
            <person name="Aniere F."/>
            <person name="Samain S."/>
            <person name="Crespeau H."/>
            <person name="Abbasi N."/>
            <person name="Aiach N."/>
            <person name="Boscus D."/>
            <person name="Dickhoff R."/>
            <person name="Dors M."/>
            <person name="Dubois I."/>
            <person name="Friedman C."/>
            <person name="Gouyvenoux M."/>
            <person name="James R."/>
            <person name="Madan A."/>
            <person name="Mairey-Estrada B."/>
            <person name="Mangenot S."/>
            <person name="Martins N."/>
            <person name="Menard M."/>
            <person name="Oztas S."/>
            <person name="Ratcliffe A."/>
            <person name="Shaffer T."/>
            <person name="Trask B."/>
            <person name="Vacherie B."/>
            <person name="Bellemere C."/>
            <person name="Belser C."/>
            <person name="Besnard-Gonnet M."/>
            <person name="Bartol-Mavel D."/>
            <person name="Boutard M."/>
            <person name="Briez-Silla S."/>
            <person name="Combette S."/>
            <person name="Dufosse-Laurent V."/>
            <person name="Ferron C."/>
            <person name="Lechaplais C."/>
            <person name="Louesse C."/>
            <person name="Muselet D."/>
            <person name="Magdelenat G."/>
            <person name="Pateau E."/>
            <person name="Petit E."/>
            <person name="Sirvain-Trukniewicz P."/>
            <person name="Trybou A."/>
            <person name="Vega-Czarny N."/>
            <person name="Bataille E."/>
            <person name="Bluet E."/>
            <person name="Bordelais I."/>
            <person name="Dubois M."/>
            <person name="Dumont C."/>
            <person name="Guerin T."/>
            <person name="Haffray S."/>
            <person name="Hammadi R."/>
            <person name="Muanga J."/>
            <person name="Pellouin V."/>
            <person name="Robert D."/>
            <person name="Wunderle E."/>
            <person name="Gauguet G."/>
            <person name="Roy A."/>
            <person name="Sainte-Marthe L."/>
            <person name="Verdier J."/>
            <person name="Verdier-Discala C."/>
            <person name="Hillier L.W."/>
            <person name="Fulton L."/>
            <person name="McPherson J."/>
            <person name="Matsuda F."/>
            <person name="Wilson R."/>
            <person name="Scarpelli C."/>
            <person name="Gyapay G."/>
            <person name="Wincker P."/>
            <person name="Saurin W."/>
            <person name="Quetier F."/>
            <person name="Waterston R."/>
            <person name="Hood L."/>
            <person name="Weissenbach J."/>
        </authorList>
    </citation>
    <scope>NUCLEOTIDE SEQUENCE [LARGE SCALE GENOMIC DNA] (IMGT ALLELE IGHV3-11*06)</scope>
</reference>
<reference key="2">
    <citation type="journal article" date="1975" name="Hoppe-Seyler's Z. Physiol. Chem.">
        <title>The primary structure of a monoclonal IgA-immunoglobulin (IgA Tro.), II. The amino acid sequence of the H-chain, alpha-type, subgroup III; structure of the complete IgA-molecule.</title>
        <authorList>
            <person name="Kratzin H."/>
            <person name="Altevogt P."/>
            <person name="Ruban E."/>
            <person name="Kortt A."/>
            <person name="Staroscik K."/>
            <person name="Hilschmann N."/>
        </authorList>
    </citation>
    <scope>PROTEIN SEQUENCE OF 20-117</scope>
    <scope>PYROGLUTAMATE FORMATION AT GLN-20</scope>
</reference>
<reference key="3">
    <citation type="journal article" date="2001" name="Exp. Clin. Immunogenet.">
        <title>Nomenclature of the human immunoglobulin heavy (IGH) genes.</title>
        <authorList>
            <person name="Lefranc M.P."/>
        </authorList>
    </citation>
    <scope>NOMENCLATURE</scope>
</reference>
<reference key="4">
    <citation type="book" date="2001" name="The Immunoglobulin FactsBook.">
        <title>The Immunoglobulin FactsBook.</title>
        <editorList>
            <person name="Lefranc M.P."/>
            <person name="Lefranc G."/>
        </editorList>
        <authorList>
            <person name="Lefranc M.P."/>
            <person name="Lefranc G."/>
        </authorList>
    </citation>
    <scope>NOMENCLATURE</scope>
</reference>
<reference key="5">
    <citation type="journal article" date="2007" name="Annu. Rev. Genet.">
        <title>Immunoglobulin somatic hypermutation.</title>
        <authorList>
            <person name="Teng G."/>
            <person name="Papavasiliou F.N."/>
        </authorList>
    </citation>
    <scope>REVIEW ON SOMATIC HYPERMUTATION</scope>
</reference>
<reference key="6">
    <citation type="journal article" date="2010" name="J. Allergy Clin. Immunol.">
        <title>Structure and function of immunoglobulins.</title>
        <authorList>
            <person name="Schroeder H.W. Jr."/>
            <person name="Cavacini L."/>
        </authorList>
    </citation>
    <scope>REVIEW ON IMMUNOGLOBULINS</scope>
</reference>
<reference key="7">
    <citation type="journal article" date="2012" name="Nat. Rev. Immunol.">
        <title>Molecular programming of B cell memory.</title>
        <authorList>
            <person name="McHeyzer-Williams M."/>
            <person name="Okitsu S."/>
            <person name="Wang N."/>
            <person name="McHeyzer-Williams L."/>
        </authorList>
    </citation>
    <scope>REVIEW ON FUNCTION</scope>
</reference>
<reference key="8">
    <citation type="journal article" date="2014" name="Front. Immunol.">
        <title>Immunoglobulin and T Cell Receptor Genes: IMGT((R)) and the Birth and Rise of Immunoinformatics.</title>
        <authorList>
            <person name="Lefranc M.P."/>
        </authorList>
    </citation>
    <scope>NOMENCLATURE</scope>
</reference>
<organism>
    <name type="scientific">Homo sapiens</name>
    <name type="common">Human</name>
    <dbReference type="NCBI Taxonomy" id="9606"/>
    <lineage>
        <taxon>Eukaryota</taxon>
        <taxon>Metazoa</taxon>
        <taxon>Chordata</taxon>
        <taxon>Craniata</taxon>
        <taxon>Vertebrata</taxon>
        <taxon>Euteleostomi</taxon>
        <taxon>Mammalia</taxon>
        <taxon>Eutheria</taxon>
        <taxon>Euarchontoglires</taxon>
        <taxon>Primates</taxon>
        <taxon>Haplorrhini</taxon>
        <taxon>Catarrhini</taxon>
        <taxon>Hominidae</taxon>
        <taxon>Homo</taxon>
    </lineage>
</organism>
<gene>
    <name evidence="4 9" type="primary">IGHV3-11</name>
</gene>
<feature type="signal peptide" evidence="3">
    <location>
        <begin position="1"/>
        <end position="19"/>
    </location>
</feature>
<feature type="chain" id="PRO_0000059914" description="Immunoglobulin heavy variable 3-11" evidence="3">
    <location>
        <begin position="20"/>
        <end position="117"/>
    </location>
</feature>
<feature type="domain" description="Ig-like" evidence="2">
    <location>
        <begin position="20"/>
        <end position="117" status="greater than"/>
    </location>
</feature>
<feature type="region of interest" description="Framework-1" evidence="1">
    <location>
        <begin position="20"/>
        <end position="44"/>
    </location>
</feature>
<feature type="region of interest" description="Complementarity-determining-1" evidence="1">
    <location>
        <begin position="45"/>
        <end position="52"/>
    </location>
</feature>
<feature type="region of interest" description="Framework-2" evidence="1">
    <location>
        <begin position="53"/>
        <end position="69"/>
    </location>
</feature>
<feature type="region of interest" description="Complementarity-determining-2" evidence="1">
    <location>
        <begin position="70"/>
        <end position="77"/>
    </location>
</feature>
<feature type="region of interest" description="Framework-3" evidence="1">
    <location>
        <begin position="78"/>
        <end position="115"/>
    </location>
</feature>
<feature type="region of interest" description="Complementarity-determining-3" evidence="1">
    <location>
        <begin position="116"/>
        <end position="117" status="greater than"/>
    </location>
</feature>
<feature type="modified residue" description="Pyrrolidone carboxylic acid" evidence="3">
    <location>
        <position position="20"/>
    </location>
</feature>
<feature type="disulfide bond" evidence="2">
    <location>
        <begin position="41"/>
        <end position="115"/>
    </location>
</feature>
<feature type="sequence conflict" description="In Ref. 2; AA sequence." evidence="10" ref="2">
    <original>E</original>
    <variation>Q</variation>
    <location>
        <position position="25"/>
    </location>
</feature>
<feature type="sequence conflict" description="In Ref. 2; AA sequence." evidence="10" ref="2">
    <original>A</original>
    <variation>V</variation>
    <location>
        <position position="42"/>
    </location>
</feature>
<feature type="sequence conflict" description="In Ref. 2; AA sequence." evidence="10" ref="2">
    <original>TFSDY</original>
    <variation>SFRDF</variation>
    <location>
        <begin position="47"/>
        <end position="51"/>
    </location>
</feature>
<feature type="sequence conflict" description="In Ref. 2; AA sequence." evidence="10" ref="2">
    <original>A</original>
    <variation>T</variation>
    <location>
        <position position="59"/>
    </location>
</feature>
<feature type="sequence conflict" description="In Ref. 2; AA sequence." evidence="10" ref="2">
    <original>SSSSSYTN</original>
    <variation>GGSGSTLY</variation>
    <location>
        <begin position="71"/>
        <end position="78"/>
    </location>
</feature>
<feature type="sequence conflict" description="In Ref. 2; AA sequence." evidence="10" ref="2">
    <original>KN</original>
    <variation>QK</variation>
    <location>
        <begin position="95"/>
        <end position="96"/>
    </location>
</feature>
<feature type="sequence conflict" description="In Ref. 2; AA sequence." evidence="10" ref="2">
    <original>A</original>
    <variation>T</variation>
    <location>
        <position position="107"/>
    </location>
</feature>
<feature type="sequence conflict" description="In Ref. 2; AA sequence." evidence="10" ref="2">
    <original>R</original>
    <variation>A</variation>
    <location>
        <position position="117"/>
    </location>
</feature>
<feature type="non-terminal residue">
    <location>
        <position position="117"/>
    </location>
</feature>
<accession>P01762</accession>
<accession>A0A0B4J1U9</accession>
<evidence type="ECO:0000250" key="1">
    <source>
        <dbReference type="UniProtKB" id="P23083"/>
    </source>
</evidence>
<evidence type="ECO:0000255" key="2">
    <source>
        <dbReference type="PROSITE-ProRule" id="PRU00114"/>
    </source>
</evidence>
<evidence type="ECO:0000269" key="3">
    <source>
    </source>
</evidence>
<evidence type="ECO:0000303" key="4">
    <source>
    </source>
</evidence>
<evidence type="ECO:0000303" key="5">
    <source>
    </source>
</evidence>
<evidence type="ECO:0000303" key="6">
    <source>
    </source>
</evidence>
<evidence type="ECO:0000303" key="7">
    <source>
    </source>
</evidence>
<evidence type="ECO:0000303" key="8">
    <source>
    </source>
</evidence>
<evidence type="ECO:0000303" key="9">
    <source ref="4"/>
</evidence>
<evidence type="ECO:0000305" key="10"/>
<evidence type="ECO:0000305" key="11">
    <source>
    </source>
</evidence>
<sequence>MEFGLSWVFLVAIIKGVQCQVQLVESGGGLVKPGGSLRLSCAASGFTFSDYYMSWIRQAPGKGLEWVSYISSSSSYTNYADSVKGRFTISRDNAKNSLYLQMNSLRAEDTAVYYCAR</sequence>
<comment type="function">
    <text evidence="5 6 7 8">V region of the variable domain of immunoglobulin heavy chains that participates in the antigen recognition (PubMed:24600447). Immunoglobulins, also known as antibodies, are membrane-bound or secreted glycoproteins produced by B lymphocytes. In the recognition phase of humoral immunity, the membrane-bound immunoglobulins serve as receptors which, upon binding of a specific antigen, trigger the clonal expansion and differentiation of B lymphocytes into immunoglobulins-secreting plasma cells. Secreted immunoglobulins mediate the effector phase of humoral immunity, which results in the elimination of bound antigens (PubMed:20176268, PubMed:22158414). The antigen binding site is formed by the variable domain of one heavy chain, together with that of its associated light chain. Thus, each immunoglobulin has two antigen binding sites with remarkable affinity for a particular antigen. The variable domains are assembled by a process called V-(D)-J rearrangement and can then be subjected to somatic hypermutations which, after exposure to antigen and selection, allow affinity maturation for a particular antigen (PubMed:17576170, PubMed:20176268).</text>
</comment>
<comment type="subunit">
    <text evidence="6">Immunoglobulins are composed of two identical heavy chains and two identical light chains; disulfide-linked.</text>
</comment>
<comment type="subcellular location">
    <subcellularLocation>
        <location evidence="6 7">Secreted</location>
    </subcellularLocation>
    <subcellularLocation>
        <location evidence="6 7">Cell membrane</location>
    </subcellularLocation>
</comment>
<comment type="polymorphism">
    <text evidence="10">There are several alleles. The sequence shown is that of IMGT allele IGHV3-11*06.</text>
</comment>
<comment type="caution">
    <text evidence="10">For examples of full-length immunoglobulin heavy chains (of different isotypes) see AC P0DOX2, AC P0DOX3, AC P0DOX4, AC P0DOX5 and AC P0DOX6.</text>
</comment>
<protein>
    <recommendedName>
        <fullName evidence="4 9">Immunoglobulin heavy variable 3-11</fullName>
    </recommendedName>
    <alternativeName>
        <fullName evidence="11">Ig heavy chain V-III region TRO</fullName>
    </alternativeName>
</protein>
<keyword id="KW-1064">Adaptive immunity</keyword>
<keyword id="KW-1003">Cell membrane</keyword>
<keyword id="KW-0903">Direct protein sequencing</keyword>
<keyword id="KW-1015">Disulfide bond</keyword>
<keyword id="KW-0391">Immunity</keyword>
<keyword id="KW-1280">Immunoglobulin</keyword>
<keyword id="KW-0393">Immunoglobulin domain</keyword>
<keyword id="KW-0472">Membrane</keyword>
<keyword id="KW-1267">Proteomics identification</keyword>
<keyword id="KW-0873">Pyrrolidone carboxylic acid</keyword>
<keyword id="KW-1185">Reference proteome</keyword>
<keyword id="KW-0964">Secreted</keyword>
<keyword id="KW-0732">Signal</keyword>